<protein>
    <recommendedName>
        <fullName evidence="1">Glutamyl-Q tRNA(Asp) synthetase</fullName>
        <shortName evidence="1">Glu-Q-RSs</shortName>
        <ecNumber evidence="1">6.1.1.-</ecNumber>
    </recommendedName>
</protein>
<keyword id="KW-0030">Aminoacyl-tRNA synthetase</keyword>
<keyword id="KW-0067">ATP-binding</keyword>
<keyword id="KW-0436">Ligase</keyword>
<keyword id="KW-0479">Metal-binding</keyword>
<keyword id="KW-0547">Nucleotide-binding</keyword>
<keyword id="KW-0862">Zinc</keyword>
<accession>Q8PJX7</accession>
<evidence type="ECO:0000255" key="1">
    <source>
        <dbReference type="HAMAP-Rule" id="MF_01428"/>
    </source>
</evidence>
<evidence type="ECO:0000305" key="2"/>
<reference key="1">
    <citation type="journal article" date="2002" name="Nature">
        <title>Comparison of the genomes of two Xanthomonas pathogens with differing host specificities.</title>
        <authorList>
            <person name="da Silva A.C.R."/>
            <person name="Ferro J.A."/>
            <person name="Reinach F.C."/>
            <person name="Farah C.S."/>
            <person name="Furlan L.R."/>
            <person name="Quaggio R.B."/>
            <person name="Monteiro-Vitorello C.B."/>
            <person name="Van Sluys M.A."/>
            <person name="Almeida N.F. Jr."/>
            <person name="Alves L.M.C."/>
            <person name="do Amaral A.M."/>
            <person name="Bertolini M.C."/>
            <person name="Camargo L.E.A."/>
            <person name="Camarotte G."/>
            <person name="Cannavan F."/>
            <person name="Cardozo J."/>
            <person name="Chambergo F."/>
            <person name="Ciapina L.P."/>
            <person name="Cicarelli R.M.B."/>
            <person name="Coutinho L.L."/>
            <person name="Cursino-Santos J.R."/>
            <person name="El-Dorry H."/>
            <person name="Faria J.B."/>
            <person name="Ferreira A.J.S."/>
            <person name="Ferreira R.C.C."/>
            <person name="Ferro M.I.T."/>
            <person name="Formighieri E.F."/>
            <person name="Franco M.C."/>
            <person name="Greggio C.C."/>
            <person name="Gruber A."/>
            <person name="Katsuyama A.M."/>
            <person name="Kishi L.T."/>
            <person name="Leite R.P."/>
            <person name="Lemos E.G.M."/>
            <person name="Lemos M.V.F."/>
            <person name="Locali E.C."/>
            <person name="Machado M.A."/>
            <person name="Madeira A.M.B.N."/>
            <person name="Martinez-Rossi N.M."/>
            <person name="Martins E.C."/>
            <person name="Meidanis J."/>
            <person name="Menck C.F.M."/>
            <person name="Miyaki C.Y."/>
            <person name="Moon D.H."/>
            <person name="Moreira L.M."/>
            <person name="Novo M.T.M."/>
            <person name="Okura V.K."/>
            <person name="Oliveira M.C."/>
            <person name="Oliveira V.R."/>
            <person name="Pereira H.A."/>
            <person name="Rossi A."/>
            <person name="Sena J.A.D."/>
            <person name="Silva C."/>
            <person name="de Souza R.F."/>
            <person name="Spinola L.A.F."/>
            <person name="Takita M.A."/>
            <person name="Tamura R.E."/>
            <person name="Teixeira E.C."/>
            <person name="Tezza R.I.D."/>
            <person name="Trindade dos Santos M."/>
            <person name="Truffi D."/>
            <person name="Tsai S.M."/>
            <person name="White F.F."/>
            <person name="Setubal J.C."/>
            <person name="Kitajima J.P."/>
        </authorList>
    </citation>
    <scope>NUCLEOTIDE SEQUENCE [LARGE SCALE GENOMIC DNA]</scope>
    <source>
        <strain>306</strain>
    </source>
</reference>
<comment type="function">
    <text evidence="1">Catalyzes the tRNA-independent activation of glutamate in presence of ATP and the subsequent transfer of glutamate onto a tRNA(Asp). Glutamate is transferred on the 2-amino-5-(4,5-dihydroxy-2-cyclopenten-1-yl) moiety of the queuosine in the wobble position of the QUC anticodon.</text>
</comment>
<comment type="cofactor">
    <cofactor evidence="1">
        <name>Zn(2+)</name>
        <dbReference type="ChEBI" id="CHEBI:29105"/>
    </cofactor>
    <text evidence="1">Binds 1 zinc ion per subunit.</text>
</comment>
<comment type="similarity">
    <text evidence="1">Belongs to the class-I aminoacyl-tRNA synthetase family. GluQ subfamily.</text>
</comment>
<comment type="caution">
    <text evidence="2">Lacks the conserved Tyr, which is one of four residues to bind the zinc atom.</text>
</comment>
<proteinExistence type="inferred from homology"/>
<gene>
    <name evidence="1" type="primary">gluQ</name>
    <name type="ordered locus">XAC2400</name>
</gene>
<name>GLUQ_XANAC</name>
<organism>
    <name type="scientific">Xanthomonas axonopodis pv. citri (strain 306)</name>
    <dbReference type="NCBI Taxonomy" id="190486"/>
    <lineage>
        <taxon>Bacteria</taxon>
        <taxon>Pseudomonadati</taxon>
        <taxon>Pseudomonadota</taxon>
        <taxon>Gammaproteobacteria</taxon>
        <taxon>Lysobacterales</taxon>
        <taxon>Lysobacteraceae</taxon>
        <taxon>Xanthomonas</taxon>
    </lineage>
</organism>
<feature type="chain" id="PRO_0000208335" description="Glutamyl-Q tRNA(Asp) synthetase">
    <location>
        <begin position="1"/>
        <end position="299"/>
    </location>
</feature>
<feature type="short sequence motif" description="'HIGH' region">
    <location>
        <begin position="12"/>
        <end position="22"/>
    </location>
</feature>
<feature type="short sequence motif" description="'KMSKS' region">
    <location>
        <begin position="226"/>
        <end position="230"/>
    </location>
</feature>
<feature type="binding site" evidence="1">
    <location>
        <begin position="9"/>
        <end position="13"/>
    </location>
    <ligand>
        <name>L-glutamate</name>
        <dbReference type="ChEBI" id="CHEBI:29985"/>
    </ligand>
</feature>
<feature type="binding site" evidence="1">
    <location>
        <position position="45"/>
    </location>
    <ligand>
        <name>L-glutamate</name>
        <dbReference type="ChEBI" id="CHEBI:29985"/>
    </ligand>
</feature>
<feature type="binding site" evidence="1">
    <location>
        <position position="101"/>
    </location>
    <ligand>
        <name>Zn(2+)</name>
        <dbReference type="ChEBI" id="CHEBI:29105"/>
    </ligand>
</feature>
<feature type="binding site" evidence="1">
    <location>
        <position position="103"/>
    </location>
    <ligand>
        <name>Zn(2+)</name>
        <dbReference type="ChEBI" id="CHEBI:29105"/>
    </ligand>
</feature>
<feature type="binding site" evidence="1">
    <location>
        <position position="118"/>
    </location>
    <ligand>
        <name>Zn(2+)</name>
        <dbReference type="ChEBI" id="CHEBI:29105"/>
    </ligand>
</feature>
<feature type="binding site" evidence="1">
    <location>
        <position position="170"/>
    </location>
    <ligand>
        <name>L-glutamate</name>
        <dbReference type="ChEBI" id="CHEBI:29985"/>
    </ligand>
</feature>
<feature type="binding site" evidence="1">
    <location>
        <position position="188"/>
    </location>
    <ligand>
        <name>L-glutamate</name>
        <dbReference type="ChEBI" id="CHEBI:29985"/>
    </ligand>
</feature>
<feature type="binding site" evidence="1">
    <location>
        <position position="229"/>
    </location>
    <ligand>
        <name>ATP</name>
        <dbReference type="ChEBI" id="CHEBI:30616"/>
    </ligand>
</feature>
<sequence length="299" mass="32522">MPSPPYLGRFAPSPTGPLHFGSLLAAFGSWLLARHAGGQWCVRIEDIDPPRAEPGACERQLRTLAAFGLHSDLPVIRQSERDAAYTAAITRLLQTGQAFECSCSRADLAGMGGIHHACVAPLGERRAVRLRVPPQPPVGFDDALQGPVLQDVYAEVGDVVLRRADGYWAYQLAVVVDDAAQGITDVVRGADLLDSTPRQMVLQRALGLPQPRYLHLPLMLDRDGRKLSKSHDAPALDDADPLPALHAAWAALGQESDALPRHAAVETVLQHAVQHFSPRLLPRQRELDLDERASGLQRD</sequence>
<dbReference type="EC" id="6.1.1.-" evidence="1"/>
<dbReference type="EMBL" id="AE008923">
    <property type="protein sequence ID" value="AAM37252.1"/>
    <property type="molecule type" value="Genomic_DNA"/>
</dbReference>
<dbReference type="SMR" id="Q8PJX7"/>
<dbReference type="KEGG" id="xac:XAC2400"/>
<dbReference type="eggNOG" id="COG0008">
    <property type="taxonomic scope" value="Bacteria"/>
</dbReference>
<dbReference type="HOGENOM" id="CLU_015768_0_1_6"/>
<dbReference type="Proteomes" id="UP000000576">
    <property type="component" value="Chromosome"/>
</dbReference>
<dbReference type="GO" id="GO:0005829">
    <property type="term" value="C:cytosol"/>
    <property type="evidence" value="ECO:0007669"/>
    <property type="project" value="TreeGrafter"/>
</dbReference>
<dbReference type="GO" id="GO:0005524">
    <property type="term" value="F:ATP binding"/>
    <property type="evidence" value="ECO:0007669"/>
    <property type="project" value="UniProtKB-KW"/>
</dbReference>
<dbReference type="GO" id="GO:0004818">
    <property type="term" value="F:glutamate-tRNA ligase activity"/>
    <property type="evidence" value="ECO:0007669"/>
    <property type="project" value="TreeGrafter"/>
</dbReference>
<dbReference type="GO" id="GO:0008270">
    <property type="term" value="F:zinc ion binding"/>
    <property type="evidence" value="ECO:0007669"/>
    <property type="project" value="InterPro"/>
</dbReference>
<dbReference type="GO" id="GO:0006424">
    <property type="term" value="P:glutamyl-tRNA aminoacylation"/>
    <property type="evidence" value="ECO:0007669"/>
    <property type="project" value="InterPro"/>
</dbReference>
<dbReference type="GO" id="GO:0006400">
    <property type="term" value="P:tRNA modification"/>
    <property type="evidence" value="ECO:0007669"/>
    <property type="project" value="InterPro"/>
</dbReference>
<dbReference type="Gene3D" id="3.40.50.620">
    <property type="entry name" value="HUPs"/>
    <property type="match status" value="1"/>
</dbReference>
<dbReference type="HAMAP" id="MF_01428">
    <property type="entry name" value="Glu_Q_tRNA_synth"/>
    <property type="match status" value="1"/>
</dbReference>
<dbReference type="InterPro" id="IPR022380">
    <property type="entry name" value="Glu-Q_tRNA(Asp)_Synthase"/>
</dbReference>
<dbReference type="InterPro" id="IPR000924">
    <property type="entry name" value="Glu/Gln-tRNA-synth"/>
</dbReference>
<dbReference type="InterPro" id="IPR020058">
    <property type="entry name" value="Glu/Gln-tRNA-synth_Ib_cat-dom"/>
</dbReference>
<dbReference type="InterPro" id="IPR049940">
    <property type="entry name" value="GluQ/Sye"/>
</dbReference>
<dbReference type="InterPro" id="IPR014729">
    <property type="entry name" value="Rossmann-like_a/b/a_fold"/>
</dbReference>
<dbReference type="NCBIfam" id="NF004314">
    <property type="entry name" value="PRK05710.1-3"/>
    <property type="match status" value="1"/>
</dbReference>
<dbReference type="NCBIfam" id="TIGR03838">
    <property type="entry name" value="queuosine_YadB"/>
    <property type="match status" value="1"/>
</dbReference>
<dbReference type="PANTHER" id="PTHR43311">
    <property type="entry name" value="GLUTAMATE--TRNA LIGASE"/>
    <property type="match status" value="1"/>
</dbReference>
<dbReference type="PANTHER" id="PTHR43311:SF1">
    <property type="entry name" value="GLUTAMYL-Q TRNA(ASP) SYNTHETASE"/>
    <property type="match status" value="1"/>
</dbReference>
<dbReference type="Pfam" id="PF00749">
    <property type="entry name" value="tRNA-synt_1c"/>
    <property type="match status" value="2"/>
</dbReference>
<dbReference type="PRINTS" id="PR00987">
    <property type="entry name" value="TRNASYNTHGLU"/>
</dbReference>
<dbReference type="SUPFAM" id="SSF52374">
    <property type="entry name" value="Nucleotidylyl transferase"/>
    <property type="match status" value="1"/>
</dbReference>